<feature type="chain" id="PRO_1000201911" description="tRNA sulfurtransferase">
    <location>
        <begin position="1"/>
        <end position="482"/>
    </location>
</feature>
<feature type="domain" description="THUMP" evidence="1">
    <location>
        <begin position="61"/>
        <end position="165"/>
    </location>
</feature>
<feature type="domain" description="Rhodanese" evidence="1">
    <location>
        <begin position="404"/>
        <end position="482"/>
    </location>
</feature>
<feature type="active site" description="Cysteine persulfide intermediate" evidence="1">
    <location>
        <position position="456"/>
    </location>
</feature>
<feature type="binding site" evidence="1">
    <location>
        <begin position="183"/>
        <end position="184"/>
    </location>
    <ligand>
        <name>ATP</name>
        <dbReference type="ChEBI" id="CHEBI:30616"/>
    </ligand>
</feature>
<feature type="binding site" evidence="1">
    <location>
        <position position="265"/>
    </location>
    <ligand>
        <name>ATP</name>
        <dbReference type="ChEBI" id="CHEBI:30616"/>
    </ligand>
</feature>
<feature type="binding site" evidence="1">
    <location>
        <position position="287"/>
    </location>
    <ligand>
        <name>ATP</name>
        <dbReference type="ChEBI" id="CHEBI:30616"/>
    </ligand>
</feature>
<feature type="binding site" evidence="1">
    <location>
        <position position="296"/>
    </location>
    <ligand>
        <name>ATP</name>
        <dbReference type="ChEBI" id="CHEBI:30616"/>
    </ligand>
</feature>
<feature type="disulfide bond" description="Redox-active" evidence="1">
    <location>
        <begin position="344"/>
        <end position="456"/>
    </location>
</feature>
<name>THII_ECOBW</name>
<accession>C4ZTI0</accession>
<gene>
    <name evidence="1" type="primary">thiI</name>
    <name type="ordered locus">BWG_0305</name>
</gene>
<dbReference type="EC" id="2.8.1.4" evidence="1"/>
<dbReference type="EMBL" id="CP001396">
    <property type="protein sequence ID" value="ACR65605.1"/>
    <property type="molecule type" value="Genomic_DNA"/>
</dbReference>
<dbReference type="RefSeq" id="WP_000668662.1">
    <property type="nucleotide sequence ID" value="NC_012759.1"/>
</dbReference>
<dbReference type="SMR" id="C4ZTI0"/>
<dbReference type="KEGG" id="ebw:BWG_0305"/>
<dbReference type="HOGENOM" id="CLU_037952_4_1_6"/>
<dbReference type="UniPathway" id="UPA00060"/>
<dbReference type="GO" id="GO:0005829">
    <property type="term" value="C:cytosol"/>
    <property type="evidence" value="ECO:0007669"/>
    <property type="project" value="TreeGrafter"/>
</dbReference>
<dbReference type="GO" id="GO:0005524">
    <property type="term" value="F:ATP binding"/>
    <property type="evidence" value="ECO:0007669"/>
    <property type="project" value="UniProtKB-UniRule"/>
</dbReference>
<dbReference type="GO" id="GO:0004810">
    <property type="term" value="F:CCA tRNA nucleotidyltransferase activity"/>
    <property type="evidence" value="ECO:0007669"/>
    <property type="project" value="InterPro"/>
</dbReference>
<dbReference type="GO" id="GO:0000049">
    <property type="term" value="F:tRNA binding"/>
    <property type="evidence" value="ECO:0007669"/>
    <property type="project" value="UniProtKB-UniRule"/>
</dbReference>
<dbReference type="GO" id="GO:0140741">
    <property type="term" value="F:tRNA-uracil-4 sulfurtransferase activity"/>
    <property type="evidence" value="ECO:0007669"/>
    <property type="project" value="UniProtKB-EC"/>
</dbReference>
<dbReference type="GO" id="GO:0009228">
    <property type="term" value="P:thiamine biosynthetic process"/>
    <property type="evidence" value="ECO:0007669"/>
    <property type="project" value="UniProtKB-KW"/>
</dbReference>
<dbReference type="GO" id="GO:0009229">
    <property type="term" value="P:thiamine diphosphate biosynthetic process"/>
    <property type="evidence" value="ECO:0007669"/>
    <property type="project" value="UniProtKB-UniRule"/>
</dbReference>
<dbReference type="GO" id="GO:0052837">
    <property type="term" value="P:thiazole biosynthetic process"/>
    <property type="evidence" value="ECO:0007669"/>
    <property type="project" value="InterPro"/>
</dbReference>
<dbReference type="GO" id="GO:0002937">
    <property type="term" value="P:tRNA 4-thiouridine biosynthesis"/>
    <property type="evidence" value="ECO:0007669"/>
    <property type="project" value="TreeGrafter"/>
</dbReference>
<dbReference type="CDD" id="cd01712">
    <property type="entry name" value="PPase_ThiI"/>
    <property type="match status" value="1"/>
</dbReference>
<dbReference type="CDD" id="cd00158">
    <property type="entry name" value="RHOD"/>
    <property type="match status" value="1"/>
</dbReference>
<dbReference type="CDD" id="cd11716">
    <property type="entry name" value="THUMP_ThiI"/>
    <property type="match status" value="1"/>
</dbReference>
<dbReference type="FunFam" id="3.30.2130.30:FF:000002">
    <property type="entry name" value="tRNA sulfurtransferase"/>
    <property type="match status" value="1"/>
</dbReference>
<dbReference type="FunFam" id="3.40.250.10:FF:000003">
    <property type="entry name" value="tRNA sulfurtransferase"/>
    <property type="match status" value="1"/>
</dbReference>
<dbReference type="FunFam" id="3.40.50.620:FF:000029">
    <property type="entry name" value="tRNA sulfurtransferase"/>
    <property type="match status" value="1"/>
</dbReference>
<dbReference type="Gene3D" id="3.30.2130.30">
    <property type="match status" value="1"/>
</dbReference>
<dbReference type="Gene3D" id="3.40.50.620">
    <property type="entry name" value="HUPs"/>
    <property type="match status" value="1"/>
</dbReference>
<dbReference type="Gene3D" id="3.40.250.10">
    <property type="entry name" value="Rhodanese-like domain"/>
    <property type="match status" value="1"/>
</dbReference>
<dbReference type="HAMAP" id="MF_00021">
    <property type="entry name" value="ThiI"/>
    <property type="match status" value="1"/>
</dbReference>
<dbReference type="InterPro" id="IPR001763">
    <property type="entry name" value="Rhodanese-like_dom"/>
</dbReference>
<dbReference type="InterPro" id="IPR036873">
    <property type="entry name" value="Rhodanese-like_dom_sf"/>
</dbReference>
<dbReference type="InterPro" id="IPR014729">
    <property type="entry name" value="Rossmann-like_a/b/a_fold"/>
</dbReference>
<dbReference type="InterPro" id="IPR020536">
    <property type="entry name" value="ThiI_AANH"/>
</dbReference>
<dbReference type="InterPro" id="IPR054173">
    <property type="entry name" value="ThiI_fer"/>
</dbReference>
<dbReference type="InterPro" id="IPR049961">
    <property type="entry name" value="ThiI_N"/>
</dbReference>
<dbReference type="InterPro" id="IPR026340">
    <property type="entry name" value="THII_Thiazole_biosynth_dom"/>
</dbReference>
<dbReference type="InterPro" id="IPR004114">
    <property type="entry name" value="THUMP_dom"/>
</dbReference>
<dbReference type="InterPro" id="IPR049962">
    <property type="entry name" value="THUMP_ThiI"/>
</dbReference>
<dbReference type="InterPro" id="IPR003720">
    <property type="entry name" value="tRNA_STrfase"/>
</dbReference>
<dbReference type="InterPro" id="IPR050102">
    <property type="entry name" value="tRNA_sulfurtransferase_ThiI"/>
</dbReference>
<dbReference type="NCBIfam" id="TIGR04271">
    <property type="entry name" value="ThiI_C_thiazole"/>
    <property type="match status" value="1"/>
</dbReference>
<dbReference type="NCBIfam" id="TIGR00342">
    <property type="entry name" value="tRNA uracil 4-sulfurtransferase ThiI"/>
    <property type="match status" value="1"/>
</dbReference>
<dbReference type="PANTHER" id="PTHR43209">
    <property type="entry name" value="TRNA SULFURTRANSFERASE"/>
    <property type="match status" value="1"/>
</dbReference>
<dbReference type="PANTHER" id="PTHR43209:SF1">
    <property type="entry name" value="TRNA SULFURTRANSFERASE"/>
    <property type="match status" value="1"/>
</dbReference>
<dbReference type="Pfam" id="PF02568">
    <property type="entry name" value="ThiI"/>
    <property type="match status" value="1"/>
</dbReference>
<dbReference type="Pfam" id="PF22025">
    <property type="entry name" value="ThiI_fer"/>
    <property type="match status" value="1"/>
</dbReference>
<dbReference type="Pfam" id="PF02926">
    <property type="entry name" value="THUMP"/>
    <property type="match status" value="1"/>
</dbReference>
<dbReference type="SMART" id="SM00981">
    <property type="entry name" value="THUMP"/>
    <property type="match status" value="1"/>
</dbReference>
<dbReference type="SUPFAM" id="SSF52402">
    <property type="entry name" value="Adenine nucleotide alpha hydrolases-like"/>
    <property type="match status" value="1"/>
</dbReference>
<dbReference type="SUPFAM" id="SSF52821">
    <property type="entry name" value="Rhodanese/Cell cycle control phosphatase"/>
    <property type="match status" value="1"/>
</dbReference>
<dbReference type="SUPFAM" id="SSF143437">
    <property type="entry name" value="THUMP domain-like"/>
    <property type="match status" value="1"/>
</dbReference>
<dbReference type="PROSITE" id="PS50206">
    <property type="entry name" value="RHODANESE_3"/>
    <property type="match status" value="1"/>
</dbReference>
<dbReference type="PROSITE" id="PS51165">
    <property type="entry name" value="THUMP"/>
    <property type="match status" value="1"/>
</dbReference>
<reference key="1">
    <citation type="journal article" date="2009" name="J. Bacteriol.">
        <title>Genomic sequencing reveals regulatory mutations and recombinational events in the widely used MC4100 lineage of Escherichia coli K-12.</title>
        <authorList>
            <person name="Ferenci T."/>
            <person name="Zhou Z."/>
            <person name="Betteridge T."/>
            <person name="Ren Y."/>
            <person name="Liu Y."/>
            <person name="Feng L."/>
            <person name="Reeves P.R."/>
            <person name="Wang L."/>
        </authorList>
    </citation>
    <scope>NUCLEOTIDE SEQUENCE [LARGE SCALE GENOMIC DNA]</scope>
    <source>
        <strain>K12 / MC4100 / BW2952</strain>
    </source>
</reference>
<evidence type="ECO:0000255" key="1">
    <source>
        <dbReference type="HAMAP-Rule" id="MF_00021"/>
    </source>
</evidence>
<comment type="function">
    <text evidence="1">Catalyzes the ATP-dependent transfer of a sulfur to tRNA to produce 4-thiouridine in position 8 of tRNAs, which functions as a near-UV photosensor. Also catalyzes the transfer of sulfur to the sulfur carrier protein ThiS, forming ThiS-thiocarboxylate. This is a step in the synthesis of thiazole, in the thiamine biosynthesis pathway. The sulfur is donated as persulfide by IscS.</text>
</comment>
<comment type="catalytic activity">
    <reaction evidence="1">
        <text>[ThiI sulfur-carrier protein]-S-sulfanyl-L-cysteine + a uridine in tRNA + 2 reduced [2Fe-2S]-[ferredoxin] + ATP + H(+) = [ThiI sulfur-carrier protein]-L-cysteine + a 4-thiouridine in tRNA + 2 oxidized [2Fe-2S]-[ferredoxin] + AMP + diphosphate</text>
        <dbReference type="Rhea" id="RHEA:24176"/>
        <dbReference type="Rhea" id="RHEA-COMP:10000"/>
        <dbReference type="Rhea" id="RHEA-COMP:10001"/>
        <dbReference type="Rhea" id="RHEA-COMP:13337"/>
        <dbReference type="Rhea" id="RHEA-COMP:13338"/>
        <dbReference type="Rhea" id="RHEA-COMP:13339"/>
        <dbReference type="Rhea" id="RHEA-COMP:13340"/>
        <dbReference type="ChEBI" id="CHEBI:15378"/>
        <dbReference type="ChEBI" id="CHEBI:29950"/>
        <dbReference type="ChEBI" id="CHEBI:30616"/>
        <dbReference type="ChEBI" id="CHEBI:33019"/>
        <dbReference type="ChEBI" id="CHEBI:33737"/>
        <dbReference type="ChEBI" id="CHEBI:33738"/>
        <dbReference type="ChEBI" id="CHEBI:61963"/>
        <dbReference type="ChEBI" id="CHEBI:65315"/>
        <dbReference type="ChEBI" id="CHEBI:136798"/>
        <dbReference type="ChEBI" id="CHEBI:456215"/>
        <dbReference type="EC" id="2.8.1.4"/>
    </reaction>
</comment>
<comment type="catalytic activity">
    <reaction evidence="1">
        <text>[ThiS sulfur-carrier protein]-C-terminal Gly-Gly-AMP + S-sulfanyl-L-cysteinyl-[cysteine desulfurase] + AH2 = [ThiS sulfur-carrier protein]-C-terminal-Gly-aminoethanethioate + L-cysteinyl-[cysteine desulfurase] + A + AMP + 2 H(+)</text>
        <dbReference type="Rhea" id="RHEA:43340"/>
        <dbReference type="Rhea" id="RHEA-COMP:12157"/>
        <dbReference type="Rhea" id="RHEA-COMP:12158"/>
        <dbReference type="Rhea" id="RHEA-COMP:12910"/>
        <dbReference type="Rhea" id="RHEA-COMP:19908"/>
        <dbReference type="ChEBI" id="CHEBI:13193"/>
        <dbReference type="ChEBI" id="CHEBI:15378"/>
        <dbReference type="ChEBI" id="CHEBI:17499"/>
        <dbReference type="ChEBI" id="CHEBI:29950"/>
        <dbReference type="ChEBI" id="CHEBI:61963"/>
        <dbReference type="ChEBI" id="CHEBI:90618"/>
        <dbReference type="ChEBI" id="CHEBI:232372"/>
        <dbReference type="ChEBI" id="CHEBI:456215"/>
    </reaction>
</comment>
<comment type="pathway">
    <text evidence="1">Cofactor biosynthesis; thiamine diphosphate biosynthesis.</text>
</comment>
<comment type="subcellular location">
    <subcellularLocation>
        <location evidence="1">Cytoplasm</location>
    </subcellularLocation>
</comment>
<comment type="similarity">
    <text evidence="1">Belongs to the ThiI family.</text>
</comment>
<organism>
    <name type="scientific">Escherichia coli (strain K12 / MC4100 / BW2952)</name>
    <dbReference type="NCBI Taxonomy" id="595496"/>
    <lineage>
        <taxon>Bacteria</taxon>
        <taxon>Pseudomonadati</taxon>
        <taxon>Pseudomonadota</taxon>
        <taxon>Gammaproteobacteria</taxon>
        <taxon>Enterobacterales</taxon>
        <taxon>Enterobacteriaceae</taxon>
        <taxon>Escherichia</taxon>
    </lineage>
</organism>
<sequence length="482" mass="54973">MKFIIKLFPEITIKSQSVRLRFIKILTGNIRNVLKHYDETLAVVRHWDNIEVRAKDENQRLAIRDALTRIPGIHHILEVEDVPFTDMHDIFEKALVQYRDQLEGKTFCVRVKRRGKHDFSSIDVERYVGGGLNQHIESARVKLTNPDVTVHLEVEDDRLLLIKGRYEGIGGFPIGTQEDVLSLISGGFDSGVSSYMLMRRGCRVHYCFFNLGGAAHEIGVRQVAHYLWNRFGSSHRVRFVAINFEPVVGEILEKIDDGQMGVILKRMMVRAASKVAERYGVQALVTGEALGQVSSQTLTNLRLIDNVSDTLILRPLISYDKEHIINLARQIGTEDFARTMPEYCGVISKSPTVKAVKSKIEAEEEKFDFSILDKVVEEANNVDIREIAQQTEQEVVEVETVNGFGPNDVILDIRSIDEQEDKPLKVEGIDVVSLPFYKLSTKFGDLDQNKTWLLWCERGVMSRLQALYLREQGFNNVKVYRP</sequence>
<protein>
    <recommendedName>
        <fullName evidence="1">tRNA sulfurtransferase</fullName>
        <ecNumber evidence="1">2.8.1.4</ecNumber>
    </recommendedName>
    <alternativeName>
        <fullName evidence="1">Sulfur carrier protein ThiS sulfurtransferase</fullName>
    </alternativeName>
    <alternativeName>
        <fullName evidence="1">Thiamine biosynthesis protein ThiI</fullName>
    </alternativeName>
    <alternativeName>
        <fullName evidence="1">tRNA 4-thiouridine synthase</fullName>
    </alternativeName>
</protein>
<proteinExistence type="inferred from homology"/>
<keyword id="KW-0067">ATP-binding</keyword>
<keyword id="KW-0963">Cytoplasm</keyword>
<keyword id="KW-1015">Disulfide bond</keyword>
<keyword id="KW-0547">Nucleotide-binding</keyword>
<keyword id="KW-0676">Redox-active center</keyword>
<keyword id="KW-0694">RNA-binding</keyword>
<keyword id="KW-0784">Thiamine biosynthesis</keyword>
<keyword id="KW-0808">Transferase</keyword>
<keyword id="KW-0820">tRNA-binding</keyword>